<accession>Q9W0P5</accession>
<name>GALE_DROME</name>
<dbReference type="EC" id="5.1.3.2" evidence="2 3"/>
<dbReference type="EC" id="5.1.3.7" evidence="3"/>
<dbReference type="EMBL" id="AE014296">
    <property type="protein sequence ID" value="AAF47398.1"/>
    <property type="molecule type" value="Genomic_DNA"/>
</dbReference>
<dbReference type="EMBL" id="AY058582">
    <property type="protein sequence ID" value="AAL13811.1"/>
    <property type="molecule type" value="mRNA"/>
</dbReference>
<dbReference type="RefSeq" id="NP_001246537.1">
    <property type="nucleotide sequence ID" value="NM_001259608.2"/>
</dbReference>
<dbReference type="RefSeq" id="NP_612044.1">
    <property type="nucleotide sequence ID" value="NM_138200.4"/>
</dbReference>
<dbReference type="SMR" id="Q9W0P5"/>
<dbReference type="BioGRID" id="63631">
    <property type="interactions" value="31"/>
</dbReference>
<dbReference type="DIP" id="DIP-20343N"/>
<dbReference type="FunCoup" id="Q9W0P5">
    <property type="interactions" value="483"/>
</dbReference>
<dbReference type="IntAct" id="Q9W0P5">
    <property type="interactions" value="44"/>
</dbReference>
<dbReference type="STRING" id="7227.FBpp0072455"/>
<dbReference type="PaxDb" id="7227-FBpp0072455"/>
<dbReference type="DNASU" id="38076"/>
<dbReference type="EnsemblMetazoa" id="FBtr0072556">
    <property type="protein sequence ID" value="FBpp0072455"/>
    <property type="gene ID" value="FBgn0035147"/>
</dbReference>
<dbReference type="EnsemblMetazoa" id="FBtr0306917">
    <property type="protein sequence ID" value="FBpp0297771"/>
    <property type="gene ID" value="FBgn0035147"/>
</dbReference>
<dbReference type="GeneID" id="38076"/>
<dbReference type="KEGG" id="dme:Dmel_CG12030"/>
<dbReference type="UCSC" id="CG12030-RA">
    <property type="organism name" value="d. melanogaster"/>
</dbReference>
<dbReference type="AGR" id="FB:FBgn0035147"/>
<dbReference type="CTD" id="2582"/>
<dbReference type="FlyBase" id="FBgn0035147">
    <property type="gene designation" value="Gale"/>
</dbReference>
<dbReference type="VEuPathDB" id="VectorBase:FBgn0035147"/>
<dbReference type="eggNOG" id="KOG1371">
    <property type="taxonomic scope" value="Eukaryota"/>
</dbReference>
<dbReference type="HOGENOM" id="CLU_007383_1_10_1"/>
<dbReference type="InParanoid" id="Q9W0P5"/>
<dbReference type="OMA" id="GEHLICN"/>
<dbReference type="OrthoDB" id="9402762at2759"/>
<dbReference type="PhylomeDB" id="Q9W0P5"/>
<dbReference type="BRENDA" id="5.1.3.2">
    <property type="organism ID" value="1994"/>
</dbReference>
<dbReference type="Reactome" id="R-DME-70370">
    <property type="pathway name" value="Galactose catabolism"/>
</dbReference>
<dbReference type="UniPathway" id="UPA00214"/>
<dbReference type="BioGRID-ORCS" id="38076">
    <property type="hits" value="1 hit in 1 CRISPR screen"/>
</dbReference>
<dbReference type="GenomeRNAi" id="38076"/>
<dbReference type="PRO" id="PR:Q9W0P5"/>
<dbReference type="Proteomes" id="UP000000803">
    <property type="component" value="Chromosome 3L"/>
</dbReference>
<dbReference type="Bgee" id="FBgn0035147">
    <property type="expression patterns" value="Expressed in capitellum (Drosophila) and 163 other cell types or tissues"/>
</dbReference>
<dbReference type="ExpressionAtlas" id="Q9W0P5">
    <property type="expression patterns" value="baseline and differential"/>
</dbReference>
<dbReference type="GO" id="GO:0005829">
    <property type="term" value="C:cytosol"/>
    <property type="evidence" value="ECO:0000318"/>
    <property type="project" value="GO_Central"/>
</dbReference>
<dbReference type="GO" id="GO:0003978">
    <property type="term" value="F:UDP-glucose 4-epimerase activity"/>
    <property type="evidence" value="ECO:0000315"/>
    <property type="project" value="FlyBase"/>
</dbReference>
<dbReference type="GO" id="GO:0003974">
    <property type="term" value="F:UDP-N-acetylglucosamine 4-epimerase activity"/>
    <property type="evidence" value="ECO:0000315"/>
    <property type="project" value="FlyBase"/>
</dbReference>
<dbReference type="GO" id="GO:0033499">
    <property type="term" value="P:galactose catabolic process via UDP-galactose, Leloir pathway"/>
    <property type="evidence" value="ECO:0000315"/>
    <property type="project" value="FlyBase"/>
</dbReference>
<dbReference type="GO" id="GO:0035167">
    <property type="term" value="P:larval lymph gland hemopoiesis"/>
    <property type="evidence" value="ECO:0000315"/>
    <property type="project" value="FlyBase"/>
</dbReference>
<dbReference type="GO" id="GO:0006011">
    <property type="term" value="P:UDP-alpha-D-glucose metabolic process"/>
    <property type="evidence" value="ECO:0000315"/>
    <property type="project" value="FlyBase"/>
</dbReference>
<dbReference type="GO" id="GO:0052573">
    <property type="term" value="P:UDP-D-galactose metabolic process"/>
    <property type="evidence" value="ECO:0000315"/>
    <property type="project" value="FlyBase"/>
</dbReference>
<dbReference type="GO" id="GO:0019276">
    <property type="term" value="P:UDP-N-acetylgalactosamine metabolic process"/>
    <property type="evidence" value="ECO:0000315"/>
    <property type="project" value="FlyBase"/>
</dbReference>
<dbReference type="GO" id="GO:0006047">
    <property type="term" value="P:UDP-N-acetylglucosamine metabolic process"/>
    <property type="evidence" value="ECO:0000315"/>
    <property type="project" value="FlyBase"/>
</dbReference>
<dbReference type="CDD" id="cd05247">
    <property type="entry name" value="UDP_G4E_1_SDR_e"/>
    <property type="match status" value="1"/>
</dbReference>
<dbReference type="Gene3D" id="3.40.50.720">
    <property type="entry name" value="NAD(P)-binding Rossmann-like Domain"/>
    <property type="match status" value="1"/>
</dbReference>
<dbReference type="Gene3D" id="3.90.25.10">
    <property type="entry name" value="UDP-galactose 4-epimerase, domain 1"/>
    <property type="match status" value="1"/>
</dbReference>
<dbReference type="InterPro" id="IPR016040">
    <property type="entry name" value="NAD(P)-bd_dom"/>
</dbReference>
<dbReference type="InterPro" id="IPR036291">
    <property type="entry name" value="NAD(P)-bd_dom_sf"/>
</dbReference>
<dbReference type="InterPro" id="IPR005886">
    <property type="entry name" value="UDP_G4E"/>
</dbReference>
<dbReference type="NCBIfam" id="TIGR01179">
    <property type="entry name" value="galE"/>
    <property type="match status" value="1"/>
</dbReference>
<dbReference type="NCBIfam" id="NF007956">
    <property type="entry name" value="PRK10675.1"/>
    <property type="match status" value="1"/>
</dbReference>
<dbReference type="PANTHER" id="PTHR43725">
    <property type="entry name" value="UDP-GLUCOSE 4-EPIMERASE"/>
    <property type="match status" value="1"/>
</dbReference>
<dbReference type="PANTHER" id="PTHR43725:SF47">
    <property type="entry name" value="UDP-GLUCOSE 4-EPIMERASE"/>
    <property type="match status" value="1"/>
</dbReference>
<dbReference type="Pfam" id="PF16363">
    <property type="entry name" value="GDP_Man_Dehyd"/>
    <property type="match status" value="1"/>
</dbReference>
<dbReference type="PRINTS" id="PR01713">
    <property type="entry name" value="NUCEPIMERASE"/>
</dbReference>
<dbReference type="SUPFAM" id="SSF51735">
    <property type="entry name" value="NAD(P)-binding Rossmann-fold domains"/>
    <property type="match status" value="1"/>
</dbReference>
<reference key="1">
    <citation type="journal article" date="2000" name="Science">
        <title>The genome sequence of Drosophila melanogaster.</title>
        <authorList>
            <person name="Adams M.D."/>
            <person name="Celniker S.E."/>
            <person name="Holt R.A."/>
            <person name="Evans C.A."/>
            <person name="Gocayne J.D."/>
            <person name="Amanatides P.G."/>
            <person name="Scherer S.E."/>
            <person name="Li P.W."/>
            <person name="Hoskins R.A."/>
            <person name="Galle R.F."/>
            <person name="George R.A."/>
            <person name="Lewis S.E."/>
            <person name="Richards S."/>
            <person name="Ashburner M."/>
            <person name="Henderson S.N."/>
            <person name="Sutton G.G."/>
            <person name="Wortman J.R."/>
            <person name="Yandell M.D."/>
            <person name="Zhang Q."/>
            <person name="Chen L.X."/>
            <person name="Brandon R.C."/>
            <person name="Rogers Y.-H.C."/>
            <person name="Blazej R.G."/>
            <person name="Champe M."/>
            <person name="Pfeiffer B.D."/>
            <person name="Wan K.H."/>
            <person name="Doyle C."/>
            <person name="Baxter E.G."/>
            <person name="Helt G."/>
            <person name="Nelson C.R."/>
            <person name="Miklos G.L.G."/>
            <person name="Abril J.F."/>
            <person name="Agbayani A."/>
            <person name="An H.-J."/>
            <person name="Andrews-Pfannkoch C."/>
            <person name="Baldwin D."/>
            <person name="Ballew R.M."/>
            <person name="Basu A."/>
            <person name="Baxendale J."/>
            <person name="Bayraktaroglu L."/>
            <person name="Beasley E.M."/>
            <person name="Beeson K.Y."/>
            <person name="Benos P.V."/>
            <person name="Berman B.P."/>
            <person name="Bhandari D."/>
            <person name="Bolshakov S."/>
            <person name="Borkova D."/>
            <person name="Botchan M.R."/>
            <person name="Bouck J."/>
            <person name="Brokstein P."/>
            <person name="Brottier P."/>
            <person name="Burtis K.C."/>
            <person name="Busam D.A."/>
            <person name="Butler H."/>
            <person name="Cadieu E."/>
            <person name="Center A."/>
            <person name="Chandra I."/>
            <person name="Cherry J.M."/>
            <person name="Cawley S."/>
            <person name="Dahlke C."/>
            <person name="Davenport L.B."/>
            <person name="Davies P."/>
            <person name="de Pablos B."/>
            <person name="Delcher A."/>
            <person name="Deng Z."/>
            <person name="Mays A.D."/>
            <person name="Dew I."/>
            <person name="Dietz S.M."/>
            <person name="Dodson K."/>
            <person name="Doup L.E."/>
            <person name="Downes M."/>
            <person name="Dugan-Rocha S."/>
            <person name="Dunkov B.C."/>
            <person name="Dunn P."/>
            <person name="Durbin K.J."/>
            <person name="Evangelista C.C."/>
            <person name="Ferraz C."/>
            <person name="Ferriera S."/>
            <person name="Fleischmann W."/>
            <person name="Fosler C."/>
            <person name="Gabrielian A.E."/>
            <person name="Garg N.S."/>
            <person name="Gelbart W.M."/>
            <person name="Glasser K."/>
            <person name="Glodek A."/>
            <person name="Gong F."/>
            <person name="Gorrell J.H."/>
            <person name="Gu Z."/>
            <person name="Guan P."/>
            <person name="Harris M."/>
            <person name="Harris N.L."/>
            <person name="Harvey D.A."/>
            <person name="Heiman T.J."/>
            <person name="Hernandez J.R."/>
            <person name="Houck J."/>
            <person name="Hostin D."/>
            <person name="Houston K.A."/>
            <person name="Howland T.J."/>
            <person name="Wei M.-H."/>
            <person name="Ibegwam C."/>
            <person name="Jalali M."/>
            <person name="Kalush F."/>
            <person name="Karpen G.H."/>
            <person name="Ke Z."/>
            <person name="Kennison J.A."/>
            <person name="Ketchum K.A."/>
            <person name="Kimmel B.E."/>
            <person name="Kodira C.D."/>
            <person name="Kraft C.L."/>
            <person name="Kravitz S."/>
            <person name="Kulp D."/>
            <person name="Lai Z."/>
            <person name="Lasko P."/>
            <person name="Lei Y."/>
            <person name="Levitsky A.A."/>
            <person name="Li J.H."/>
            <person name="Li Z."/>
            <person name="Liang Y."/>
            <person name="Lin X."/>
            <person name="Liu X."/>
            <person name="Mattei B."/>
            <person name="McIntosh T.C."/>
            <person name="McLeod M.P."/>
            <person name="McPherson D."/>
            <person name="Merkulov G."/>
            <person name="Milshina N.V."/>
            <person name="Mobarry C."/>
            <person name="Morris J."/>
            <person name="Moshrefi A."/>
            <person name="Mount S.M."/>
            <person name="Moy M."/>
            <person name="Murphy B."/>
            <person name="Murphy L."/>
            <person name="Muzny D.M."/>
            <person name="Nelson D.L."/>
            <person name="Nelson D.R."/>
            <person name="Nelson K.A."/>
            <person name="Nixon K."/>
            <person name="Nusskern D.R."/>
            <person name="Pacleb J.M."/>
            <person name="Palazzolo M."/>
            <person name="Pittman G.S."/>
            <person name="Pan S."/>
            <person name="Pollard J."/>
            <person name="Puri V."/>
            <person name="Reese M.G."/>
            <person name="Reinert K."/>
            <person name="Remington K."/>
            <person name="Saunders R.D.C."/>
            <person name="Scheeler F."/>
            <person name="Shen H."/>
            <person name="Shue B.C."/>
            <person name="Siden-Kiamos I."/>
            <person name="Simpson M."/>
            <person name="Skupski M.P."/>
            <person name="Smith T.J."/>
            <person name="Spier E."/>
            <person name="Spradling A.C."/>
            <person name="Stapleton M."/>
            <person name="Strong R."/>
            <person name="Sun E."/>
            <person name="Svirskas R."/>
            <person name="Tector C."/>
            <person name="Turner R."/>
            <person name="Venter E."/>
            <person name="Wang A.H."/>
            <person name="Wang X."/>
            <person name="Wang Z.-Y."/>
            <person name="Wassarman D.A."/>
            <person name="Weinstock G.M."/>
            <person name="Weissenbach J."/>
            <person name="Williams S.M."/>
            <person name="Woodage T."/>
            <person name="Worley K.C."/>
            <person name="Wu D."/>
            <person name="Yang S."/>
            <person name="Yao Q.A."/>
            <person name="Ye J."/>
            <person name="Yeh R.-F."/>
            <person name="Zaveri J.S."/>
            <person name="Zhan M."/>
            <person name="Zhang G."/>
            <person name="Zhao Q."/>
            <person name="Zheng L."/>
            <person name="Zheng X.H."/>
            <person name="Zhong F.N."/>
            <person name="Zhong W."/>
            <person name="Zhou X."/>
            <person name="Zhu S.C."/>
            <person name="Zhu X."/>
            <person name="Smith H.O."/>
            <person name="Gibbs R.A."/>
            <person name="Myers E.W."/>
            <person name="Rubin G.M."/>
            <person name="Venter J.C."/>
        </authorList>
    </citation>
    <scope>NUCLEOTIDE SEQUENCE [LARGE SCALE GENOMIC DNA]</scope>
    <source>
        <strain>Berkeley</strain>
    </source>
</reference>
<reference key="2">
    <citation type="journal article" date="2002" name="Genome Biol.">
        <title>Annotation of the Drosophila melanogaster euchromatic genome: a systematic review.</title>
        <authorList>
            <person name="Misra S."/>
            <person name="Crosby M.A."/>
            <person name="Mungall C.J."/>
            <person name="Matthews B.B."/>
            <person name="Campbell K.S."/>
            <person name="Hradecky P."/>
            <person name="Huang Y."/>
            <person name="Kaminker J.S."/>
            <person name="Millburn G.H."/>
            <person name="Prochnik S.E."/>
            <person name="Smith C.D."/>
            <person name="Tupy J.L."/>
            <person name="Whitfield E.J."/>
            <person name="Bayraktaroglu L."/>
            <person name="Berman B.P."/>
            <person name="Bettencourt B.R."/>
            <person name="Celniker S.E."/>
            <person name="de Grey A.D.N.J."/>
            <person name="Drysdale R.A."/>
            <person name="Harris N.L."/>
            <person name="Richter J."/>
            <person name="Russo S."/>
            <person name="Schroeder A.J."/>
            <person name="Shu S.Q."/>
            <person name="Stapleton M."/>
            <person name="Yamada C."/>
            <person name="Ashburner M."/>
            <person name="Gelbart W.M."/>
            <person name="Rubin G.M."/>
            <person name="Lewis S.E."/>
        </authorList>
    </citation>
    <scope>GENOME REANNOTATION</scope>
    <source>
        <strain>Berkeley</strain>
    </source>
</reference>
<reference key="3">
    <citation type="journal article" date="2002" name="Genome Biol.">
        <title>A Drosophila full-length cDNA resource.</title>
        <authorList>
            <person name="Stapleton M."/>
            <person name="Carlson J.W."/>
            <person name="Brokstein P."/>
            <person name="Yu C."/>
            <person name="Champe M."/>
            <person name="George R.A."/>
            <person name="Guarin H."/>
            <person name="Kronmiller B."/>
            <person name="Pacleb J.M."/>
            <person name="Park S."/>
            <person name="Wan K.H."/>
            <person name="Rubin G.M."/>
            <person name="Celniker S.E."/>
        </authorList>
    </citation>
    <scope>NUCLEOTIDE SEQUENCE [LARGE SCALE MRNA]</scope>
    <source>
        <strain>Berkeley</strain>
        <tissue>Embryo</tissue>
    </source>
</reference>
<reference key="4">
    <citation type="journal article" date="2010" name="Dis. Model. Mech.">
        <title>UDP-galactose 4' epimerase (GALE) is essential for development of Drosophila melanogaster.</title>
        <authorList>
            <person name="Sanders R.D."/>
            <person name="Sefton J.M."/>
            <person name="Moberg K.H."/>
            <person name="Fridovich-Keil J.L."/>
        </authorList>
    </citation>
    <scope>FUNCTION</scope>
    <scope>CATALYTIC ACTIVITY</scope>
</reference>
<reference key="5">
    <citation type="journal article" date="2012" name="PLoS Genet.">
        <title>UDP-galactose 4'-epimerase activities toward UDP-Gal and UDP-GalNAc play different roles in the development of Drosophila melanogaster.</title>
        <authorList>
            <person name="Daenzer J.M."/>
            <person name="Sanders R.D."/>
            <person name="Hang D."/>
            <person name="Fridovich-Keil J.L."/>
        </authorList>
    </citation>
    <scope>FUNCTION</scope>
    <scope>CATALYTIC ACTIVITY</scope>
    <scope>DISRUPTION PHENOTYPE</scope>
</reference>
<organism>
    <name type="scientific">Drosophila melanogaster</name>
    <name type="common">Fruit fly</name>
    <dbReference type="NCBI Taxonomy" id="7227"/>
    <lineage>
        <taxon>Eukaryota</taxon>
        <taxon>Metazoa</taxon>
        <taxon>Ecdysozoa</taxon>
        <taxon>Arthropoda</taxon>
        <taxon>Hexapoda</taxon>
        <taxon>Insecta</taxon>
        <taxon>Pterygota</taxon>
        <taxon>Neoptera</taxon>
        <taxon>Endopterygota</taxon>
        <taxon>Diptera</taxon>
        <taxon>Brachycera</taxon>
        <taxon>Muscomorpha</taxon>
        <taxon>Ephydroidea</taxon>
        <taxon>Drosophilidae</taxon>
        <taxon>Drosophila</taxon>
        <taxon>Sophophora</taxon>
    </lineage>
</organism>
<proteinExistence type="evidence at protein level"/>
<comment type="function">
    <text evidence="2 3">Catalyzes two distinct but analogous reactions: the reversible epimerization of UDP-glucose to UDP-galactose and the reversible epimerization of UDP-N-acetylglucosamine to UDP-N-acetylgalactosamine (PubMed:20519568, PubMed:22654673). The reaction with UDP-Gal plays a critical role in the Leloir pathway of galactose catabolism in which galactose is converted to the glycolytic intermediate glucose 6-phosphate. It contributes to the catabolism of dietary galactose and enables the endogenous biosynthesis of both UDP-Gal and UDP-GalNAc when exogenous sources are limited (PubMed:22654673). Both UDP-sugar interconversions are important in the synthesis of glycoproteins and glycolipids.</text>
</comment>
<comment type="catalytic activity">
    <reaction evidence="2 3">
        <text>UDP-alpha-D-glucose = UDP-alpha-D-galactose</text>
        <dbReference type="Rhea" id="RHEA:22168"/>
        <dbReference type="ChEBI" id="CHEBI:58885"/>
        <dbReference type="ChEBI" id="CHEBI:66914"/>
        <dbReference type="EC" id="5.1.3.2"/>
    </reaction>
</comment>
<comment type="catalytic activity">
    <reaction evidence="3">
        <text>UDP-N-acetyl-alpha-D-glucosamine = UDP-N-acetyl-alpha-D-galactosamine</text>
        <dbReference type="Rhea" id="RHEA:20517"/>
        <dbReference type="ChEBI" id="CHEBI:57705"/>
        <dbReference type="ChEBI" id="CHEBI:67138"/>
        <dbReference type="EC" id="5.1.3.7"/>
    </reaction>
</comment>
<comment type="cofactor">
    <cofactor evidence="1">
        <name>NAD(+)</name>
        <dbReference type="ChEBI" id="CHEBI:57540"/>
    </cofactor>
</comment>
<comment type="pathway">
    <text>Carbohydrate metabolism; galactose metabolism.</text>
</comment>
<comment type="subunit">
    <text evidence="1">Homodimer.</text>
</comment>
<comment type="disruption phenotype">
    <text evidence="3">Required from embryogenesis through pupation, even in the absence of galactose. Loss of Gale during pupation leads to defects in fecundity, both in male and female. Gale activity toward UDP-Gal is both necessary and sufficient for male fecundity, but Gale activities toward both UDP-Gal and UDP-GalNAc are required for female fecundity. Eggs may require a more substantial pool of specific UDP-sugar substrates than sperm. Individual loss of one activity or the other later in development results in differential sensitivity to galactose. Both male and female deficient in Gale activity toward UDP-Gal exhibit a reduced lifespan when exposed to galactose; this effect is not seen in flies uniquely deficient in Gale activity toward UDP-GalNAc.</text>
</comment>
<comment type="similarity">
    <text evidence="6">Belongs to the NAD(P)-dependent epimerase/dehydratase family.</text>
</comment>
<evidence type="ECO:0000250" key="1">
    <source>
        <dbReference type="UniProtKB" id="Q14376"/>
    </source>
</evidence>
<evidence type="ECO:0000269" key="2">
    <source>
    </source>
</evidence>
<evidence type="ECO:0000269" key="3">
    <source>
    </source>
</evidence>
<evidence type="ECO:0000303" key="4">
    <source>
    </source>
</evidence>
<evidence type="ECO:0000303" key="5">
    <source>
    </source>
</evidence>
<evidence type="ECO:0000305" key="6"/>
<gene>
    <name type="primary">Gale</name>
    <name type="ORF">CG12030</name>
</gene>
<sequence length="350" mass="38697">MAPPTVLVTGGAGYIGSHTVLEMLNAGYNVICVDNLCNAYSSGAKLPEALSRVQEITGKKVNFYRVDITDREQVRSVFQEHKIDMVAHFAALKAVGESCRIPLQYYHNNMTGTNVLLEAMADNNVFKFVYSSSATVYGEPKFLPVTEEHPTGNCTSPYGKTKYFTEEILKDLCKSDKRWAVVSLRYFNPVGAHISGRIGEDPNGEPNNLMPYIAQVAVGRRPSLSVYGSDFPTHDGTGVRDYIHIVDLAEGHVKALDKLRNIAETGFFAYNLGTGVGYSVLDMVKAFEKASGKKVNYTLVDRRSGDVATCYADATLADKKLGWKAERGIDKMCEDTWRWQSQNPNGYANK</sequence>
<feature type="chain" id="PRO_0000183192" description="UDP-glucose 4-epimerase">
    <location>
        <begin position="1"/>
        <end position="350"/>
    </location>
</feature>
<feature type="active site" description="Proton acceptor" evidence="1">
    <location>
        <position position="158"/>
    </location>
</feature>
<feature type="binding site" evidence="1">
    <location>
        <begin position="13"/>
        <end position="15"/>
    </location>
    <ligand>
        <name>NAD(+)</name>
        <dbReference type="ChEBI" id="CHEBI:57540"/>
    </ligand>
</feature>
<feature type="binding site" evidence="1">
    <location>
        <begin position="34"/>
        <end position="38"/>
    </location>
    <ligand>
        <name>NAD(+)</name>
        <dbReference type="ChEBI" id="CHEBI:57540"/>
    </ligand>
</feature>
<feature type="binding site" evidence="1">
    <location>
        <begin position="67"/>
        <end position="68"/>
    </location>
    <ligand>
        <name>NAD(+)</name>
        <dbReference type="ChEBI" id="CHEBI:57540"/>
    </ligand>
</feature>
<feature type="binding site" evidence="1">
    <location>
        <position position="89"/>
    </location>
    <ligand>
        <name>NAD(+)</name>
        <dbReference type="ChEBI" id="CHEBI:57540"/>
    </ligand>
</feature>
<feature type="binding site" evidence="1">
    <location>
        <position position="93"/>
    </location>
    <ligand>
        <name>NAD(+)</name>
        <dbReference type="ChEBI" id="CHEBI:57540"/>
    </ligand>
</feature>
<feature type="binding site" evidence="1">
    <location>
        <begin position="133"/>
        <end position="135"/>
    </location>
    <ligand>
        <name>substrate</name>
    </ligand>
</feature>
<feature type="binding site" evidence="1">
    <location>
        <position position="162"/>
    </location>
    <ligand>
        <name>NAD(+)</name>
        <dbReference type="ChEBI" id="CHEBI:57540"/>
    </ligand>
</feature>
<feature type="binding site" evidence="1">
    <location>
        <begin position="186"/>
        <end position="188"/>
    </location>
    <ligand>
        <name>substrate</name>
    </ligand>
</feature>
<feature type="binding site" evidence="1">
    <location>
        <position position="186"/>
    </location>
    <ligand>
        <name>NAD(+)</name>
        <dbReference type="ChEBI" id="CHEBI:57540"/>
    </ligand>
</feature>
<feature type="binding site" evidence="1">
    <location>
        <begin position="207"/>
        <end position="209"/>
    </location>
    <ligand>
        <name>substrate</name>
    </ligand>
</feature>
<feature type="binding site" evidence="1">
    <location>
        <begin position="225"/>
        <end position="227"/>
    </location>
    <ligand>
        <name>substrate</name>
    </ligand>
</feature>
<feature type="binding site" evidence="1">
    <location>
        <position position="240"/>
    </location>
    <ligand>
        <name>substrate</name>
    </ligand>
</feature>
<feature type="binding site" evidence="1">
    <location>
        <begin position="303"/>
        <end position="306"/>
    </location>
    <ligand>
        <name>substrate</name>
    </ligand>
</feature>
<keyword id="KW-0119">Carbohydrate metabolism</keyword>
<keyword id="KW-0299">Galactose metabolism</keyword>
<keyword id="KW-0413">Isomerase</keyword>
<keyword id="KW-0520">NAD</keyword>
<keyword id="KW-1185">Reference proteome</keyword>
<protein>
    <recommendedName>
        <fullName evidence="4 5">UDP-glucose 4-epimerase</fullName>
        <ecNumber evidence="2 3">5.1.3.2</ecNumber>
    </recommendedName>
    <alternativeName>
        <fullName>Galactowaldenase</fullName>
    </alternativeName>
    <alternativeName>
        <fullName evidence="5">UDP-N-acetylgalactosamine 4-epimerase</fullName>
        <shortName evidence="5">UDP-GalNAc 4-epimerase</shortName>
    </alternativeName>
    <alternativeName>
        <fullName evidence="5">UDP-N-acetylglucosamine 4-epimerase</fullName>
        <shortName evidence="5">UDP-GlcNAc 4-epimerase</shortName>
        <ecNumber evidence="3">5.1.3.7</ecNumber>
    </alternativeName>
    <alternativeName>
        <fullName evidence="4 5">UDP-galactose 4-epimerase</fullName>
    </alternativeName>
</protein>